<protein>
    <recommendedName>
        <fullName>Myosin-2</fullName>
    </recommendedName>
    <alternativeName>
        <fullName>AtATM2</fullName>
    </alternativeName>
    <alternativeName>
        <fullName>AtMYOS1</fullName>
    </alternativeName>
</protein>
<evidence type="ECO:0000250" key="1"/>
<evidence type="ECO:0000255" key="2"/>
<evidence type="ECO:0000255" key="3">
    <source>
        <dbReference type="PROSITE-ProRule" id="PRU00116"/>
    </source>
</evidence>
<evidence type="ECO:0000255" key="4">
    <source>
        <dbReference type="PROSITE-ProRule" id="PRU00782"/>
    </source>
</evidence>
<evidence type="ECO:0000255" key="5">
    <source>
        <dbReference type="PROSITE-ProRule" id="PRU01190"/>
    </source>
</evidence>
<evidence type="ECO:0000256" key="6">
    <source>
        <dbReference type="SAM" id="MobiDB-lite"/>
    </source>
</evidence>
<evidence type="ECO:0000269" key="7">
    <source>
    </source>
</evidence>
<evidence type="ECO:0000269" key="8">
    <source>
    </source>
</evidence>
<evidence type="ECO:0000305" key="9"/>
<dbReference type="EMBL" id="AB010695">
    <property type="protein sequence ID" value="BAB10751.1"/>
    <property type="status" value="ALT_SEQ"/>
    <property type="molecule type" value="Genomic_DNA"/>
</dbReference>
<dbReference type="EMBL" id="CP002688">
    <property type="protein sequence ID" value="AED96479.1"/>
    <property type="molecule type" value="Genomic_DNA"/>
</dbReference>
<dbReference type="EMBL" id="AK229471">
    <property type="protein sequence ID" value="BAF01329.1"/>
    <property type="molecule type" value="mRNA"/>
</dbReference>
<dbReference type="EMBL" id="Z34292">
    <property type="protein sequence ID" value="CAA84065.1"/>
    <property type="status" value="ALT_FRAME"/>
    <property type="molecule type" value="mRNA"/>
</dbReference>
<dbReference type="PIR" id="S51823">
    <property type="entry name" value="S51823"/>
</dbReference>
<dbReference type="RefSeq" id="NP_001078755.1">
    <molecule id="F4K0A6-1"/>
    <property type="nucleotide sequence ID" value="NM_001085286.2"/>
</dbReference>
<dbReference type="SMR" id="F4K0A6"/>
<dbReference type="FunCoup" id="F4K0A6">
    <property type="interactions" value="389"/>
</dbReference>
<dbReference type="STRING" id="3702.F4K0A6"/>
<dbReference type="GlyGen" id="F4K0A6">
    <property type="glycosylation" value="1 site"/>
</dbReference>
<dbReference type="iPTMnet" id="F4K0A6"/>
<dbReference type="PaxDb" id="3702-AT5G54280.2"/>
<dbReference type="ProteomicsDB" id="251404">
    <molecule id="F4K0A6-1"/>
</dbReference>
<dbReference type="EnsemblPlants" id="AT5G54280.2">
    <molecule id="F4K0A6-1"/>
    <property type="protein sequence ID" value="AT5G54280.2"/>
    <property type="gene ID" value="AT5G54280"/>
</dbReference>
<dbReference type="GeneID" id="835516"/>
<dbReference type="Gramene" id="AT5G54280.2">
    <molecule id="F4K0A6-1"/>
    <property type="protein sequence ID" value="AT5G54280.2"/>
    <property type="gene ID" value="AT5G54280"/>
</dbReference>
<dbReference type="KEGG" id="ath:AT5G54280"/>
<dbReference type="Araport" id="AT5G54280"/>
<dbReference type="TAIR" id="AT5G54280">
    <property type="gene designation" value="ATM2"/>
</dbReference>
<dbReference type="eggNOG" id="KOG0160">
    <property type="taxonomic scope" value="Eukaryota"/>
</dbReference>
<dbReference type="InParanoid" id="F4K0A6"/>
<dbReference type="PRO" id="PR:F4K0A6"/>
<dbReference type="Proteomes" id="UP000006548">
    <property type="component" value="Chromosome 5"/>
</dbReference>
<dbReference type="ExpressionAtlas" id="F4K0A6">
    <property type="expression patterns" value="baseline and differential"/>
</dbReference>
<dbReference type="GO" id="GO:0005768">
    <property type="term" value="C:endosome"/>
    <property type="evidence" value="ECO:0007669"/>
    <property type="project" value="UniProtKB-SubCell"/>
</dbReference>
<dbReference type="GO" id="GO:0016459">
    <property type="term" value="C:myosin complex"/>
    <property type="evidence" value="ECO:0000250"/>
    <property type="project" value="TAIR"/>
</dbReference>
<dbReference type="GO" id="GO:0009506">
    <property type="term" value="C:plasmodesma"/>
    <property type="evidence" value="ECO:0007669"/>
    <property type="project" value="UniProtKB-SubCell"/>
</dbReference>
<dbReference type="GO" id="GO:0003779">
    <property type="term" value="F:actin binding"/>
    <property type="evidence" value="ECO:0007669"/>
    <property type="project" value="UniProtKB-KW"/>
</dbReference>
<dbReference type="GO" id="GO:0005524">
    <property type="term" value="F:ATP binding"/>
    <property type="evidence" value="ECO:0007669"/>
    <property type="project" value="UniProtKB-KW"/>
</dbReference>
<dbReference type="GO" id="GO:0005516">
    <property type="term" value="F:calmodulin binding"/>
    <property type="evidence" value="ECO:0007669"/>
    <property type="project" value="UniProtKB-KW"/>
</dbReference>
<dbReference type="GO" id="GO:0003774">
    <property type="term" value="F:cytoskeletal motor activity"/>
    <property type="evidence" value="ECO:0000250"/>
    <property type="project" value="TAIR"/>
</dbReference>
<dbReference type="GO" id="GO:0030048">
    <property type="term" value="P:actin filament-based movement"/>
    <property type="evidence" value="ECO:0000304"/>
    <property type="project" value="TAIR"/>
</dbReference>
<dbReference type="GO" id="GO:0006897">
    <property type="term" value="P:endocytosis"/>
    <property type="evidence" value="ECO:0007669"/>
    <property type="project" value="UniProtKB-KW"/>
</dbReference>
<dbReference type="CDD" id="cd01383">
    <property type="entry name" value="MYSc_Myo8"/>
    <property type="match status" value="1"/>
</dbReference>
<dbReference type="FunFam" id="1.10.10.820:FF:000001">
    <property type="entry name" value="Myosin heavy chain"/>
    <property type="match status" value="1"/>
</dbReference>
<dbReference type="FunFam" id="1.20.120.720:FF:000028">
    <property type="entry name" value="Myosin IE heavy chain"/>
    <property type="match status" value="1"/>
</dbReference>
<dbReference type="FunFam" id="1.20.58.530:FF:000013">
    <property type="entry name" value="Unconventional myosin-XIX"/>
    <property type="match status" value="1"/>
</dbReference>
<dbReference type="Gene3D" id="1.10.10.820">
    <property type="match status" value="1"/>
</dbReference>
<dbReference type="Gene3D" id="1.20.5.190">
    <property type="match status" value="1"/>
</dbReference>
<dbReference type="Gene3D" id="1.20.58.530">
    <property type="match status" value="1"/>
</dbReference>
<dbReference type="Gene3D" id="6.20.240.20">
    <property type="match status" value="1"/>
</dbReference>
<dbReference type="Gene3D" id="3.40.850.10">
    <property type="entry name" value="Kinesin motor domain"/>
    <property type="match status" value="1"/>
</dbReference>
<dbReference type="Gene3D" id="1.20.120.720">
    <property type="entry name" value="Myosin VI head, motor domain, U50 subdomain"/>
    <property type="match status" value="1"/>
</dbReference>
<dbReference type="InterPro" id="IPR000048">
    <property type="entry name" value="IQ_motif_EF-hand-BS"/>
</dbReference>
<dbReference type="InterPro" id="IPR036961">
    <property type="entry name" value="Kinesin_motor_dom_sf"/>
</dbReference>
<dbReference type="InterPro" id="IPR001609">
    <property type="entry name" value="Myosin_head_motor_dom-like"/>
</dbReference>
<dbReference type="InterPro" id="IPR004009">
    <property type="entry name" value="Myosin_N"/>
</dbReference>
<dbReference type="InterPro" id="IPR036022">
    <property type="entry name" value="MYSc_Myo8"/>
</dbReference>
<dbReference type="InterPro" id="IPR027417">
    <property type="entry name" value="P-loop_NTPase"/>
</dbReference>
<dbReference type="PANTHER" id="PTHR13140:SF706">
    <property type="entry name" value="DILUTE CLASS UNCONVENTIONAL MYOSIN, ISOFORM C"/>
    <property type="match status" value="1"/>
</dbReference>
<dbReference type="PANTHER" id="PTHR13140">
    <property type="entry name" value="MYOSIN"/>
    <property type="match status" value="1"/>
</dbReference>
<dbReference type="Pfam" id="PF00612">
    <property type="entry name" value="IQ"/>
    <property type="match status" value="2"/>
</dbReference>
<dbReference type="Pfam" id="PF00063">
    <property type="entry name" value="Myosin_head"/>
    <property type="match status" value="1"/>
</dbReference>
<dbReference type="Pfam" id="PF25369">
    <property type="entry name" value="SH3_VIII-1_N"/>
    <property type="match status" value="1"/>
</dbReference>
<dbReference type="PRINTS" id="PR00193">
    <property type="entry name" value="MYOSINHEAVY"/>
</dbReference>
<dbReference type="SMART" id="SM00015">
    <property type="entry name" value="IQ"/>
    <property type="match status" value="3"/>
</dbReference>
<dbReference type="SMART" id="SM00242">
    <property type="entry name" value="MYSc"/>
    <property type="match status" value="1"/>
</dbReference>
<dbReference type="SUPFAM" id="SSF52540">
    <property type="entry name" value="P-loop containing nucleoside triphosphate hydrolases"/>
    <property type="match status" value="1"/>
</dbReference>
<dbReference type="PROSITE" id="PS50096">
    <property type="entry name" value="IQ"/>
    <property type="match status" value="3"/>
</dbReference>
<dbReference type="PROSITE" id="PS51456">
    <property type="entry name" value="MYOSIN_MOTOR"/>
    <property type="match status" value="1"/>
</dbReference>
<dbReference type="PROSITE" id="PS51844">
    <property type="entry name" value="SH3_LIKE"/>
    <property type="match status" value="1"/>
</dbReference>
<organism>
    <name type="scientific">Arabidopsis thaliana</name>
    <name type="common">Mouse-ear cress</name>
    <dbReference type="NCBI Taxonomy" id="3702"/>
    <lineage>
        <taxon>Eukaryota</taxon>
        <taxon>Viridiplantae</taxon>
        <taxon>Streptophyta</taxon>
        <taxon>Embryophyta</taxon>
        <taxon>Tracheophyta</taxon>
        <taxon>Spermatophyta</taxon>
        <taxon>Magnoliopsida</taxon>
        <taxon>eudicotyledons</taxon>
        <taxon>Gunneridae</taxon>
        <taxon>Pentapetalae</taxon>
        <taxon>rosids</taxon>
        <taxon>malvids</taxon>
        <taxon>Brassicales</taxon>
        <taxon>Brassicaceae</taxon>
        <taxon>Camelineae</taxon>
        <taxon>Arabidopsis</taxon>
    </lineage>
</organism>
<gene>
    <name type="primary">VIII-2</name>
    <name type="synonym">ATM2</name>
    <name type="synonym">ATM4</name>
    <name type="synonym">MYOS1</name>
    <name type="ordered locus">At5g54280</name>
    <name type="ORF">MDK4.10</name>
</gene>
<proteinExistence type="evidence at transcript level"/>
<accession>F4K0A6</accession>
<accession>Q0WNH0</accession>
<accession>Q39157</accession>
<accession>Q9FL71</accession>
<reference key="1">
    <citation type="journal article" date="1998" name="DNA Res.">
        <title>Structural analysis of Arabidopsis thaliana chromosome 5. V. Sequence features of the regions of 1,381,565 bp covered by twenty one physically assigned P1 and TAC clones.</title>
        <authorList>
            <person name="Kaneko T."/>
            <person name="Kotani H."/>
            <person name="Nakamura Y."/>
            <person name="Sato S."/>
            <person name="Asamizu E."/>
            <person name="Miyajima N."/>
            <person name="Tabata S."/>
        </authorList>
    </citation>
    <scope>NUCLEOTIDE SEQUENCE [LARGE SCALE GENOMIC DNA]</scope>
    <source>
        <strain>cv. Columbia</strain>
    </source>
</reference>
<reference key="2">
    <citation type="journal article" date="2017" name="Plant J.">
        <title>Araport11: a complete reannotation of the Arabidopsis thaliana reference genome.</title>
        <authorList>
            <person name="Cheng C.Y."/>
            <person name="Krishnakumar V."/>
            <person name="Chan A.P."/>
            <person name="Thibaud-Nissen F."/>
            <person name="Schobel S."/>
            <person name="Town C.D."/>
        </authorList>
    </citation>
    <scope>GENOME REANNOTATION</scope>
    <source>
        <strain>cv. Columbia</strain>
    </source>
</reference>
<reference key="3">
    <citation type="submission" date="2006-07" db="EMBL/GenBank/DDBJ databases">
        <title>Large-scale analysis of RIKEN Arabidopsis full-length (RAFL) cDNAs.</title>
        <authorList>
            <person name="Totoki Y."/>
            <person name="Seki M."/>
            <person name="Ishida J."/>
            <person name="Nakajima M."/>
            <person name="Enju A."/>
            <person name="Kamiya A."/>
            <person name="Narusaka M."/>
            <person name="Shin-i T."/>
            <person name="Nakagawa M."/>
            <person name="Sakamoto N."/>
            <person name="Oishi K."/>
            <person name="Kohara Y."/>
            <person name="Kobayashi M."/>
            <person name="Toyoda A."/>
            <person name="Sakaki Y."/>
            <person name="Sakurai T."/>
            <person name="Iida K."/>
            <person name="Akiyama K."/>
            <person name="Satou M."/>
            <person name="Toyoda T."/>
            <person name="Konagaya A."/>
            <person name="Carninci P."/>
            <person name="Kawai J."/>
            <person name="Hayashizaki Y."/>
            <person name="Shinozaki K."/>
        </authorList>
    </citation>
    <scope>NUCLEOTIDE SEQUENCE [LARGE SCALE MRNA]</scope>
    <source>
        <strain>cv. Columbia</strain>
    </source>
</reference>
<reference key="4">
    <citation type="journal article" date="1994" name="Plant Mol. Biol.">
        <title>Molecular analysis of the myosin gene family in Arabidopsis thaliana.</title>
        <authorList>
            <person name="Kinkema M.D."/>
            <person name="Wang H."/>
            <person name="Schiefelbein J."/>
        </authorList>
    </citation>
    <scope>NUCLEOTIDE SEQUENCE [MRNA] OF 118-1220</scope>
    <scope>TISSUE SPECIFICITY</scope>
    <source>
        <strain>cv. Columbia</strain>
        <tissue>Seedling</tissue>
    </source>
</reference>
<reference key="5">
    <citation type="journal article" date="2000" name="J. Cell Sci.">
        <title>A myosin family tree.</title>
        <authorList>
            <person name="Hodge T."/>
            <person name="Cope M.J."/>
        </authorList>
    </citation>
    <scope>GENE FAMILY</scope>
</reference>
<reference key="6">
    <citation type="journal article" date="2001" name="Genome Biol.">
        <title>Analysis of the myosins encoded in the recently completed Arabidopsis thaliana genome sequence.</title>
        <authorList>
            <person name="Reddy A.S."/>
            <person name="Day I.S."/>
        </authorList>
    </citation>
    <scope>GENE FAMILY</scope>
</reference>
<reference key="7">
    <citation type="journal article" date="2008" name="BMC Plant Biol.">
        <title>Different subcellular localizations and functions of Arabidopsis myosin VIII.</title>
        <authorList>
            <person name="Golomb L."/>
            <person name="Abu-Abied M."/>
            <person name="Belausov E."/>
            <person name="Sadot E."/>
        </authorList>
    </citation>
    <scope>SUBCELLULAR LOCATION</scope>
</reference>
<reference key="8">
    <citation type="journal article" date="2008" name="Cell Motil. Cytoskeleton">
        <title>The Arabidopsis class VIII myosin ATM2 is involved in endocytosis.</title>
        <authorList>
            <person name="Sattarzadeh A."/>
            <person name="Franzen R."/>
            <person name="Schmelzer E."/>
        </authorList>
    </citation>
    <scope>SUBCELLULAR LOCATION</scope>
    <scope>FUNCTION</scope>
</reference>
<reference key="9">
    <citation type="journal article" date="2011" name="Plant Physiol.">
        <title>Expression, splicing, and evolution of the myosin gene family in plants.</title>
        <authorList>
            <person name="Peremyslov V.V."/>
            <person name="Mockler T.C."/>
            <person name="Filichkin S.A."/>
            <person name="Fox S.E."/>
            <person name="Jaiswal P."/>
            <person name="Makarova K.S."/>
            <person name="Koonin E.V."/>
            <person name="Dolja V.V."/>
        </authorList>
    </citation>
    <scope>GENE FAMILY</scope>
    <scope>NOMENCLATURE</scope>
</reference>
<sequence length="1220" mass="138562">MMLSASPNTLAKSSLEEMLESLRQKDECDRPKDMPPALPSRPNSRARLPSARRSLPANFNVSSVMEDQNGSVVSVTPAVEAESERKEEGVKRKEKDLGVKRNSFGSKKMRTGLRSESPYAAEKEEEGVKISIAKVSLVENTEEHNKPESEWNNNVEYFIKKKLRVWCRVSNGQWQLGKIQSTSADTSLVMLSTANVVKVSTEELFPANPDILEGVEDLIQLSYLNEPSVLYNLRVRYLQDVIYSKAGPVLIAVNPFKNVEIYGNDVISAYQKKVMDAPHVYAVADAAYDEMMREEKNQSLIISGESGAGKTETAKFAMQYLAALGGGSCGVEYEILKTTCILEAFGNAKTSRNANSSRFGKLIEIHFSAMGKICGAKLETFLLEKSRVVQLFNGERSYHIFYELCAGASPILKERLKLKTASEYTYLSQSDCLTIAGVDDAQKFHKLLEAFDIVQIPKEHQERAFALLAAVLWLGNVSFRVTDNENHVEVVADEAVANAAMLMGCNTEELMVVLSTRKLQAGTDCIAKKLTLRQATDMRDGIAKFIYANLFDWLVEQINIALEVGKSRTGRSISILDIYGFESFKNNSFEQFCINYANERLQQHFNRHLFKLEQEEYEEDGIDWTKVEFVDNQECLDLIEKKPIGLLSLLDEESNFPKATDLTFANKLKQHLKTNSCFKGERGRAFRVNHYAGEVLYDTNGFLEKNRDPLPADLINLLSSCDCQLLKLFSTKMRGKSQKPLMLSDSTNQTVGTKFKGQLFKLMNKLENTSPHFIRCIKPNSKQLPRVYEEDLVLQQLRCCGVLEVVRISRSGYPTRLTHQEFAGRYGFLLSDKKVAQDPLSVSIAVLKQYDVHPEMYQVGYTKLYLRTGQIGIFEDRRKKVLQGIVGLQKHFRGHLSRAYFQNMRKVTLVLQSYIRGENARRLFDTEAKFHADSVSEASTDELSAVIHLQSAVRGWLARKHFNSMQRQKELRNVATKSKRKAGRRISEDKDIPLEQPQVQPTSMSDLQKRILKSEAALSQKEEENTALREQLRQFEERWSEYDIKMKSMEETWQKQMSSLQMSLAAARKSLAAESITGQAGGRQDTSISPFGYDSEDTMSTGTPGVRTPTNKFTNGNTPELRIRELNGSLNAVNHLAREFDQRRLNFDEDARAIVEVKLGPQATPNGQQQQHPEDEFRRLKLRFETWKKDYKARLRDTKARLHRVDGDKGRHRKWWGKRG</sequence>
<name>MYO2_ARATH</name>
<keyword id="KW-0009">Actin-binding</keyword>
<keyword id="KW-0025">Alternative splicing</keyword>
<keyword id="KW-0067">ATP-binding</keyword>
<keyword id="KW-0112">Calmodulin-binding</keyword>
<keyword id="KW-0965">Cell junction</keyword>
<keyword id="KW-0175">Coiled coil</keyword>
<keyword id="KW-0254">Endocytosis</keyword>
<keyword id="KW-0967">Endosome</keyword>
<keyword id="KW-0505">Motor protein</keyword>
<keyword id="KW-0518">Myosin</keyword>
<keyword id="KW-0547">Nucleotide-binding</keyword>
<keyword id="KW-1185">Reference proteome</keyword>
<keyword id="KW-0677">Repeat</keyword>
<comment type="function">
    <text evidence="1 7">Myosin heavy chain that is required for the cell cycle-regulated transport of various organelles and proteins for their segregation. Functions by binding with its tail domain to receptor proteins on organelles and exerting force with its N-terminal motor domain against actin filaments, thereby transporting its cargo along polarized actin cables (By similarity). Involved in endocytosis via its action in endosomal trafficking.</text>
</comment>
<comment type="subunit">
    <text evidence="1">Homodimer.</text>
</comment>
<comment type="subcellular location">
    <subcellularLocation>
        <location>Cell junction</location>
        <location>Plasmodesma</location>
    </subcellularLocation>
    <subcellularLocation>
        <location>Endosome</location>
    </subcellularLocation>
</comment>
<comment type="alternative products">
    <event type="alternative splicing"/>
    <isoform>
        <id>F4K0A6-1</id>
        <name>1</name>
        <sequence type="displayed"/>
    </isoform>
    <text>A number of isoforms are produced. According to EST sequences.</text>
</comment>
<comment type="tissue specificity">
    <text evidence="8">Expressed in flowers, leaves and roots.</text>
</comment>
<comment type="domain">
    <text evidence="1">IQ domain mediates interaction with calmodulin.</text>
</comment>
<comment type="similarity">
    <text evidence="9">Belongs to the TRAFAC class myosin-kinesin ATPase superfamily. Myosin family. Plant myosin class VIII subfamily.</text>
</comment>
<comment type="sequence caution" evidence="9">
    <conflict type="erroneous gene model prediction">
        <sequence resource="EMBL-CDS" id="BAB10751"/>
    </conflict>
</comment>
<comment type="sequence caution" evidence="9">
    <conflict type="frameshift">
        <sequence resource="EMBL-CDS" id="CAA84065"/>
    </conflict>
</comment>
<feature type="chain" id="PRO_0000422858" description="Myosin-2">
    <location>
        <begin position="1"/>
        <end position="1220"/>
    </location>
</feature>
<feature type="domain" description="Myosin N-terminal SH3-like" evidence="5">
    <location>
        <begin position="160"/>
        <end position="209"/>
    </location>
</feature>
<feature type="domain" description="Myosin motor" evidence="4">
    <location>
        <begin position="213"/>
        <end position="879"/>
    </location>
</feature>
<feature type="domain" description="IQ 1" evidence="3">
    <location>
        <begin position="881"/>
        <end position="910"/>
    </location>
</feature>
<feature type="domain" description="IQ 2" evidence="3">
    <location>
        <begin position="904"/>
        <end position="933"/>
    </location>
</feature>
<feature type="domain" description="IQ 3" evidence="3">
    <location>
        <begin position="942"/>
        <end position="971"/>
    </location>
</feature>
<feature type="region of interest" description="Disordered" evidence="6">
    <location>
        <begin position="1"/>
        <end position="54"/>
    </location>
</feature>
<feature type="region of interest" description="Disordered" evidence="6">
    <location>
        <begin position="68"/>
        <end position="95"/>
    </location>
</feature>
<feature type="region of interest" description="Actin-binding" evidence="2">
    <location>
        <begin position="638"/>
        <end position="672"/>
    </location>
</feature>
<feature type="region of interest" description="Actin-binding" evidence="1">
    <location>
        <begin position="759"/>
        <end position="781"/>
    </location>
</feature>
<feature type="region of interest" description="Disordered" evidence="6">
    <location>
        <begin position="968"/>
        <end position="1007"/>
    </location>
</feature>
<feature type="region of interest" description="Disordered" evidence="6">
    <location>
        <begin position="1075"/>
        <end position="1118"/>
    </location>
</feature>
<feature type="coiled-coil region" evidence="2">
    <location>
        <begin position="1003"/>
        <end position="1071"/>
    </location>
</feature>
<feature type="compositionally biased region" description="Polar residues" evidence="6">
    <location>
        <begin position="1"/>
        <end position="12"/>
    </location>
</feature>
<feature type="compositionally biased region" description="Basic and acidic residues" evidence="6">
    <location>
        <begin position="20"/>
        <end position="33"/>
    </location>
</feature>
<feature type="compositionally biased region" description="Low complexity" evidence="6">
    <location>
        <begin position="40"/>
        <end position="54"/>
    </location>
</feature>
<feature type="compositionally biased region" description="Basic and acidic residues" evidence="6">
    <location>
        <begin position="82"/>
        <end position="95"/>
    </location>
</feature>
<feature type="compositionally biased region" description="Polar residues" evidence="6">
    <location>
        <begin position="997"/>
        <end position="1006"/>
    </location>
</feature>
<feature type="compositionally biased region" description="Polar residues" evidence="6">
    <location>
        <begin position="1098"/>
        <end position="1118"/>
    </location>
</feature>
<feature type="binding site" evidence="2">
    <location>
        <begin position="304"/>
        <end position="311"/>
    </location>
    <ligand>
        <name>ATP</name>
        <dbReference type="ChEBI" id="CHEBI:30616"/>
    </ligand>
</feature>
<feature type="binding site" evidence="2">
    <location>
        <begin position="353"/>
        <end position="361"/>
    </location>
    <ligand>
        <name>ATP</name>
        <dbReference type="ChEBI" id="CHEBI:30616"/>
    </ligand>
</feature>
<feature type="sequence conflict" description="In Ref. 3; BAF01329." evidence="9" ref="3">
    <original>I</original>
    <variation>V</variation>
    <location>
        <position position="130"/>
    </location>
</feature>
<feature type="sequence conflict" description="In Ref. 4; CAA84065." evidence="9" ref="4">
    <location>
        <position position="294"/>
    </location>
</feature>